<name>PLIA_BOTMO</name>
<reference key="1">
    <citation type="journal article" date="2003" name="Biochem. Biophys. Res. Commun.">
        <title>Structural and functional analysis of BmjMIP, a phospholipase A2 myotoxin inhibitor protein from Bothrops moojeni snake plasma.</title>
        <authorList>
            <person name="Soares A.M."/>
            <person name="Marcussi S."/>
            <person name="Stabeli R.G."/>
            <person name="Franca S.C."/>
            <person name="Giglio J.R."/>
            <person name="Ward R.J."/>
            <person name="Arantes E.C."/>
        </authorList>
    </citation>
    <scope>NUCLEOTIDE SEQUENCE [MRNA]</scope>
    <scope>PROTEIN SEQUENCE OF 20-61</scope>
    <scope>FUNCTION</scope>
    <scope>SUBUNIT</scope>
    <scope>SUBCELLULAR LOCATION</scope>
    <scope>GLYCOSYLATION</scope>
    <source>
        <tissue>Liver</tissue>
        <tissue>Plasma</tissue>
    </source>
</reference>
<organism>
    <name type="scientific">Bothrops moojeni</name>
    <name type="common">Lance-headed viper</name>
    <name type="synonym">Caissaca</name>
    <dbReference type="NCBI Taxonomy" id="98334"/>
    <lineage>
        <taxon>Eukaryota</taxon>
        <taxon>Metazoa</taxon>
        <taxon>Chordata</taxon>
        <taxon>Craniata</taxon>
        <taxon>Vertebrata</taxon>
        <taxon>Euteleostomi</taxon>
        <taxon>Lepidosauria</taxon>
        <taxon>Squamata</taxon>
        <taxon>Bifurcata</taxon>
        <taxon>Unidentata</taxon>
        <taxon>Episquamata</taxon>
        <taxon>Toxicofera</taxon>
        <taxon>Serpentes</taxon>
        <taxon>Colubroidea</taxon>
        <taxon>Viperidae</taxon>
        <taxon>Crotalinae</taxon>
        <taxon>Bothrops</taxon>
    </lineage>
</organism>
<keyword id="KW-0106">Calcium</keyword>
<keyword id="KW-0903">Direct protein sequencing</keyword>
<keyword id="KW-1015">Disulfide bond</keyword>
<keyword id="KW-0325">Glycoprotein</keyword>
<keyword id="KW-0430">Lectin</keyword>
<keyword id="KW-0593">Phospholipase A2 inhibitor</keyword>
<keyword id="KW-0964">Secreted</keyword>
<keyword id="KW-0732">Signal</keyword>
<feature type="signal peptide" evidence="5">
    <location>
        <begin position="1"/>
        <end position="19"/>
    </location>
</feature>
<feature type="chain" id="PRO_0000355232" description="Phospholipase A2 myotoxin inhibitor protein">
    <location>
        <begin position="20"/>
        <end position="166"/>
    </location>
</feature>
<feature type="domain" description="C-type lectin" evidence="4">
    <location>
        <begin position="46"/>
        <end position="161"/>
    </location>
</feature>
<feature type="glycosylation site" description="N-linked (GlcNAc...) asparagine" evidence="3">
    <location>
        <position position="122"/>
    </location>
</feature>
<feature type="disulfide bond" evidence="2">
    <location>
        <begin position="83"/>
        <end position="160"/>
    </location>
</feature>
<feature type="disulfide bond" evidence="2">
    <location>
        <begin position="138"/>
        <end position="152"/>
    </location>
</feature>
<comment type="function">
    <text evidence="5">This phospholipase A2 inhibitor binds directly phospholipase A2 in the presence or absence of calcium. Has anti-enzymatic, anti-myotoxic, anti-edema inducing, anti-cytotoxic, anti-bactericidal, and anti-lethal properties against basic and acidic phospholipases A2 from Bothrops venoms.</text>
</comment>
<comment type="subunit">
    <text evidence="1 5">Oligomer (PubMed:12604331). Homotrimer; non-covalently linked (By similarity).</text>
</comment>
<comment type="subcellular location">
    <subcellularLocation>
        <location evidence="5">Secreted</location>
    </subcellularLocation>
    <text evidence="5">Secreted in plasma.</text>
</comment>
<comment type="tissue specificity">
    <text evidence="5">Expressed by the liver.</text>
</comment>
<comment type="PTM">
    <text evidence="5">Glycosylated. The glycosylation has no role in the association of this PLI and PA2 enzyme.</text>
</comment>
<comment type="similarity">
    <text evidence="6">Belongs to the alpha-type phospholipase A2 inhibitor family.</text>
</comment>
<protein>
    <recommendedName>
        <fullName>Phospholipase A2 myotoxin inhibitor protein</fullName>
        <shortName>BmjMIP</shortName>
        <shortName>alpha-PLI</shortName>
    </recommendedName>
</protein>
<proteinExistence type="evidence at protein level"/>
<sequence>MRLILLSGLLLLGTFLANGDETDPDGQVLNSLIETLMHLQREFANLKYAFLTVHKARSFGSGSERLYVSNKEIKNFEPLGDICSQAGGHIPSPQLENQNKAFANVLERHNKAAYLVVGDSANFTNWAAGQPNEADGTCVKADTHGSWHSASCDDNLLVVCEFYFIL</sequence>
<accession>Q8AYA2</accession>
<evidence type="ECO:0000250" key="1">
    <source>
        <dbReference type="UniProtKB" id="A1XRN2"/>
    </source>
</evidence>
<evidence type="ECO:0000250" key="2">
    <source>
        <dbReference type="UniProtKB" id="P21755"/>
    </source>
</evidence>
<evidence type="ECO:0000255" key="3"/>
<evidence type="ECO:0000255" key="4">
    <source>
        <dbReference type="PROSITE-ProRule" id="PRU00040"/>
    </source>
</evidence>
<evidence type="ECO:0000269" key="5">
    <source>
    </source>
</evidence>
<evidence type="ECO:0000305" key="6"/>
<dbReference type="EMBL" id="AF542045">
    <property type="protein sequence ID" value="AAN34657.1"/>
    <property type="molecule type" value="mRNA"/>
</dbReference>
<dbReference type="SMR" id="Q8AYA2"/>
<dbReference type="GO" id="GO:0005576">
    <property type="term" value="C:extracellular region"/>
    <property type="evidence" value="ECO:0007669"/>
    <property type="project" value="UniProtKB-SubCell"/>
</dbReference>
<dbReference type="GO" id="GO:0030246">
    <property type="term" value="F:carbohydrate binding"/>
    <property type="evidence" value="ECO:0007669"/>
    <property type="project" value="UniProtKB-KW"/>
</dbReference>
<dbReference type="GO" id="GO:0019834">
    <property type="term" value="F:phospholipase A2 inhibitor activity"/>
    <property type="evidence" value="ECO:0007669"/>
    <property type="project" value="UniProtKB-KW"/>
</dbReference>
<dbReference type="Gene3D" id="3.10.100.10">
    <property type="entry name" value="Mannose-Binding Protein A, subunit A"/>
    <property type="match status" value="1"/>
</dbReference>
<dbReference type="InterPro" id="IPR001304">
    <property type="entry name" value="C-type_lectin-like"/>
</dbReference>
<dbReference type="InterPro" id="IPR016186">
    <property type="entry name" value="C-type_lectin-like/link_sf"/>
</dbReference>
<dbReference type="InterPro" id="IPR018378">
    <property type="entry name" value="C-type_lectin_CS"/>
</dbReference>
<dbReference type="InterPro" id="IPR016187">
    <property type="entry name" value="CTDL_fold"/>
</dbReference>
<dbReference type="Pfam" id="PF00059">
    <property type="entry name" value="Lectin_C"/>
    <property type="match status" value="1"/>
</dbReference>
<dbReference type="SUPFAM" id="SSF56436">
    <property type="entry name" value="C-type lectin-like"/>
    <property type="match status" value="1"/>
</dbReference>
<dbReference type="PROSITE" id="PS00615">
    <property type="entry name" value="C_TYPE_LECTIN_1"/>
    <property type="match status" value="1"/>
</dbReference>
<dbReference type="PROSITE" id="PS50041">
    <property type="entry name" value="C_TYPE_LECTIN_2"/>
    <property type="match status" value="1"/>
</dbReference>